<sequence length="122" mass="14001">MNKLNKQNIINHVNNLQLKKSVPNFQVGDTVSVSIKIADEKRTRIQKFDGLVLRRKGSGLSETFIVRKESSGVGVEKNFHVHNPNIEIELKRKGKVRRAYISYMRERSGKSARIKEKVVNTK</sequence>
<keyword id="KW-1185">Reference proteome</keyword>
<keyword id="KW-0687">Ribonucleoprotein</keyword>
<keyword id="KW-0689">Ribosomal protein</keyword>
<accession>Q9RDV2</accession>
<evidence type="ECO:0000255" key="1">
    <source>
        <dbReference type="HAMAP-Rule" id="MF_00402"/>
    </source>
</evidence>
<evidence type="ECO:0000305" key="2"/>
<protein>
    <recommendedName>
        <fullName evidence="1">Large ribosomal subunit protein bL19</fullName>
    </recommendedName>
    <alternativeName>
        <fullName evidence="2">50S ribosomal protein L19</fullName>
    </alternativeName>
</protein>
<feature type="chain" id="PRO_0000163484" description="Large ribosomal subunit protein bL19">
    <location>
        <begin position="1"/>
        <end position="122"/>
    </location>
</feature>
<proteinExistence type="inferred from homology"/>
<organism>
    <name type="scientific">Mycoplasmoides gallisepticum (strain R(low / passage 15 / clone 2))</name>
    <name type="common">Mycoplasma gallisepticum</name>
    <dbReference type="NCBI Taxonomy" id="710127"/>
    <lineage>
        <taxon>Bacteria</taxon>
        <taxon>Bacillati</taxon>
        <taxon>Mycoplasmatota</taxon>
        <taxon>Mycoplasmoidales</taxon>
        <taxon>Mycoplasmoidaceae</taxon>
        <taxon>Mycoplasmoides</taxon>
    </lineage>
</organism>
<gene>
    <name evidence="1" type="primary">rplS</name>
    <name evidence="1" type="synonym">rpl19</name>
    <name type="ordered locus">MYCGA6240</name>
    <name type="ORF">MGA_0438</name>
</gene>
<reference key="1">
    <citation type="journal article" date="2002" name="FEMS Microbiol. Lett.">
        <title>Mycoplasma gallisepticum rpoA gene cluster.</title>
        <authorList>
            <person name="Skamrov A.V."/>
            <person name="Feoktistova E.S."/>
            <person name="Gol'dman M.A."/>
            <person name="Bibilashvili R.S."/>
        </authorList>
    </citation>
    <scope>NUCLEOTIDE SEQUENCE [GENOMIC DNA]</scope>
    <source>
        <strain>A5969Var.B</strain>
    </source>
</reference>
<reference key="2">
    <citation type="journal article" date="2003" name="Microbiology">
        <title>The complete genome sequence of the avian pathogen Mycoplasma gallisepticum strain R(low).</title>
        <authorList>
            <person name="Papazisi L."/>
            <person name="Gorton T.S."/>
            <person name="Kutish G."/>
            <person name="Markham P.F."/>
            <person name="Browning G.F."/>
            <person name="Nguyen D.K."/>
            <person name="Swartzell S."/>
            <person name="Madan A."/>
            <person name="Mahairas G."/>
            <person name="Geary S.J."/>
        </authorList>
    </citation>
    <scope>NUCLEOTIDE SEQUENCE [LARGE SCALE GENOMIC DNA]</scope>
    <source>
        <strain>R(low / passage 15 / clone 2)</strain>
    </source>
</reference>
<dbReference type="EMBL" id="L35043">
    <property type="protein sequence ID" value="AAF19035.1"/>
    <property type="molecule type" value="Genomic_DNA"/>
</dbReference>
<dbReference type="EMBL" id="AE015450">
    <property type="protein sequence ID" value="AAP56974.2"/>
    <property type="molecule type" value="Genomic_DNA"/>
</dbReference>
<dbReference type="RefSeq" id="WP_011113883.1">
    <property type="nucleotide sequence ID" value="NC_004829.2"/>
</dbReference>
<dbReference type="SMR" id="Q9RDV2"/>
<dbReference type="GeneID" id="93510460"/>
<dbReference type="KEGG" id="mga:MGA_0438"/>
<dbReference type="HOGENOM" id="CLU_103507_2_2_14"/>
<dbReference type="OrthoDB" id="9803541at2"/>
<dbReference type="Proteomes" id="UP000001418">
    <property type="component" value="Chromosome"/>
</dbReference>
<dbReference type="GO" id="GO:0022625">
    <property type="term" value="C:cytosolic large ribosomal subunit"/>
    <property type="evidence" value="ECO:0007669"/>
    <property type="project" value="TreeGrafter"/>
</dbReference>
<dbReference type="GO" id="GO:0003735">
    <property type="term" value="F:structural constituent of ribosome"/>
    <property type="evidence" value="ECO:0007669"/>
    <property type="project" value="InterPro"/>
</dbReference>
<dbReference type="GO" id="GO:0006412">
    <property type="term" value="P:translation"/>
    <property type="evidence" value="ECO:0007669"/>
    <property type="project" value="UniProtKB-UniRule"/>
</dbReference>
<dbReference type="Gene3D" id="2.30.30.790">
    <property type="match status" value="1"/>
</dbReference>
<dbReference type="HAMAP" id="MF_00402">
    <property type="entry name" value="Ribosomal_bL19"/>
    <property type="match status" value="1"/>
</dbReference>
<dbReference type="InterPro" id="IPR001857">
    <property type="entry name" value="Ribosomal_bL19"/>
</dbReference>
<dbReference type="InterPro" id="IPR018257">
    <property type="entry name" value="Ribosomal_bL19_CS"/>
</dbReference>
<dbReference type="InterPro" id="IPR038657">
    <property type="entry name" value="Ribosomal_bL19_sf"/>
</dbReference>
<dbReference type="InterPro" id="IPR008991">
    <property type="entry name" value="Translation_prot_SH3-like_sf"/>
</dbReference>
<dbReference type="NCBIfam" id="TIGR01024">
    <property type="entry name" value="rplS_bact"/>
    <property type="match status" value="1"/>
</dbReference>
<dbReference type="PANTHER" id="PTHR15680:SF9">
    <property type="entry name" value="LARGE RIBOSOMAL SUBUNIT PROTEIN BL19M"/>
    <property type="match status" value="1"/>
</dbReference>
<dbReference type="PANTHER" id="PTHR15680">
    <property type="entry name" value="RIBOSOMAL PROTEIN L19"/>
    <property type="match status" value="1"/>
</dbReference>
<dbReference type="Pfam" id="PF01245">
    <property type="entry name" value="Ribosomal_L19"/>
    <property type="match status" value="1"/>
</dbReference>
<dbReference type="PIRSF" id="PIRSF002191">
    <property type="entry name" value="Ribosomal_L19"/>
    <property type="match status" value="1"/>
</dbReference>
<dbReference type="PRINTS" id="PR00061">
    <property type="entry name" value="RIBOSOMALL19"/>
</dbReference>
<dbReference type="SUPFAM" id="SSF50104">
    <property type="entry name" value="Translation proteins SH3-like domain"/>
    <property type="match status" value="1"/>
</dbReference>
<dbReference type="PROSITE" id="PS01015">
    <property type="entry name" value="RIBOSOMAL_L19"/>
    <property type="match status" value="1"/>
</dbReference>
<name>RL19_MYCGA</name>
<comment type="function">
    <text evidence="1">This protein is located at the 30S-50S ribosomal subunit interface and may play a role in the structure and function of the aminoacyl-tRNA binding site.</text>
</comment>
<comment type="similarity">
    <text evidence="1">Belongs to the bacterial ribosomal protein bL19 family.</text>
</comment>